<protein>
    <recommendedName>
        <fullName>Chitinase 4</fullName>
        <ecNumber>3.2.1.14</ecNumber>
    </recommendedName>
    <alternativeName>
        <fullName>OsChia2b</fullName>
    </alternativeName>
    <alternativeName>
        <fullName>Pathogenesis related (PR)-3 chitinase 4</fullName>
    </alternativeName>
</protein>
<accession>O04138</accession>
<accession>Q7XU64</accession>
<name>CHI4_ORYSJ</name>
<reference key="1">
    <citation type="journal article" date="1998" name="Breed. Sci.">
        <title>Genomic sequence and polymorphisms of a rice chitinase gene, Cht4.</title>
        <authorList>
            <person name="Nakazaki T."/>
            <person name="Ikehashi H."/>
        </authorList>
    </citation>
    <scope>NUCLEOTIDE SEQUENCE [GENOMIC DNA]</scope>
    <source>
        <strain>cv. Nipponbare</strain>
    </source>
</reference>
<reference key="2">
    <citation type="journal article" date="2003" name="Biosci. Biotechnol. Biochem.">
        <title>Structure, heterologous expression, and properties of rice (Oryza sativa L.) family 19 chitinases.</title>
        <authorList>
            <person name="Truong N.-H."/>
            <person name="Park S.-M."/>
            <person name="Nishizawa Y."/>
            <person name="Watanabe T."/>
            <person name="Sasaki T."/>
            <person name="Itoh Y."/>
        </authorList>
    </citation>
    <scope>NUCLEOTIDE SEQUENCE [MRNA] (ISOFORM 2)</scope>
    <scope>FUNCTION</scope>
    <source>
        <strain>cv. Nipponbare</strain>
    </source>
</reference>
<reference key="3">
    <citation type="journal article" date="2002" name="Nature">
        <title>Sequence and analysis of rice chromosome 4.</title>
        <authorList>
            <person name="Feng Q."/>
            <person name="Zhang Y."/>
            <person name="Hao P."/>
            <person name="Wang S."/>
            <person name="Fu G."/>
            <person name="Huang Y."/>
            <person name="Li Y."/>
            <person name="Zhu J."/>
            <person name="Liu Y."/>
            <person name="Hu X."/>
            <person name="Jia P."/>
            <person name="Zhang Y."/>
            <person name="Zhao Q."/>
            <person name="Ying K."/>
            <person name="Yu S."/>
            <person name="Tang Y."/>
            <person name="Weng Q."/>
            <person name="Zhang L."/>
            <person name="Lu Y."/>
            <person name="Mu J."/>
            <person name="Lu Y."/>
            <person name="Zhang L.S."/>
            <person name="Yu Z."/>
            <person name="Fan D."/>
            <person name="Liu X."/>
            <person name="Lu T."/>
            <person name="Li C."/>
            <person name="Wu Y."/>
            <person name="Sun T."/>
            <person name="Lei H."/>
            <person name="Li T."/>
            <person name="Hu H."/>
            <person name="Guan J."/>
            <person name="Wu M."/>
            <person name="Zhang R."/>
            <person name="Zhou B."/>
            <person name="Chen Z."/>
            <person name="Chen L."/>
            <person name="Jin Z."/>
            <person name="Wang R."/>
            <person name="Yin H."/>
            <person name="Cai Z."/>
            <person name="Ren S."/>
            <person name="Lv G."/>
            <person name="Gu W."/>
            <person name="Zhu G."/>
            <person name="Tu Y."/>
            <person name="Jia J."/>
            <person name="Zhang Y."/>
            <person name="Chen J."/>
            <person name="Kang H."/>
            <person name="Chen X."/>
            <person name="Shao C."/>
            <person name="Sun Y."/>
            <person name="Hu Q."/>
            <person name="Zhang X."/>
            <person name="Zhang W."/>
            <person name="Wang L."/>
            <person name="Ding C."/>
            <person name="Sheng H."/>
            <person name="Gu J."/>
            <person name="Chen S."/>
            <person name="Ni L."/>
            <person name="Zhu F."/>
            <person name="Chen W."/>
            <person name="Lan L."/>
            <person name="Lai Y."/>
            <person name="Cheng Z."/>
            <person name="Gu M."/>
            <person name="Jiang J."/>
            <person name="Li J."/>
            <person name="Hong G."/>
            <person name="Xue Y."/>
            <person name="Han B."/>
        </authorList>
    </citation>
    <scope>NUCLEOTIDE SEQUENCE [LARGE SCALE GENOMIC DNA]</scope>
    <source>
        <strain>cv. Nipponbare</strain>
    </source>
</reference>
<reference key="4">
    <citation type="journal article" date="2005" name="Nature">
        <title>The map-based sequence of the rice genome.</title>
        <authorList>
            <consortium name="International rice genome sequencing project (IRGSP)"/>
        </authorList>
    </citation>
    <scope>NUCLEOTIDE SEQUENCE [LARGE SCALE GENOMIC DNA]</scope>
    <source>
        <strain>cv. Nipponbare</strain>
    </source>
</reference>
<reference key="5">
    <citation type="journal article" date="2008" name="Nucleic Acids Res.">
        <title>The rice annotation project database (RAP-DB): 2008 update.</title>
        <authorList>
            <consortium name="The rice annotation project (RAP)"/>
        </authorList>
    </citation>
    <scope>GENOME REANNOTATION</scope>
    <source>
        <strain>cv. Nipponbare</strain>
    </source>
</reference>
<reference key="6">
    <citation type="journal article" date="2013" name="Rice">
        <title>Improvement of the Oryza sativa Nipponbare reference genome using next generation sequence and optical map data.</title>
        <authorList>
            <person name="Kawahara Y."/>
            <person name="de la Bastide M."/>
            <person name="Hamilton J.P."/>
            <person name="Kanamori H."/>
            <person name="McCombie W.R."/>
            <person name="Ouyang S."/>
            <person name="Schwartz D.C."/>
            <person name="Tanaka T."/>
            <person name="Wu J."/>
            <person name="Zhou S."/>
            <person name="Childs K.L."/>
            <person name="Davidson R.M."/>
            <person name="Lin H."/>
            <person name="Quesada-Ocampo L."/>
            <person name="Vaillancourt B."/>
            <person name="Sakai H."/>
            <person name="Lee S.S."/>
            <person name="Kim J."/>
            <person name="Numa H."/>
            <person name="Itoh T."/>
            <person name="Buell C.R."/>
            <person name="Matsumoto T."/>
        </authorList>
    </citation>
    <scope>GENOME REANNOTATION</scope>
    <source>
        <strain>cv. Nipponbare</strain>
    </source>
</reference>
<reference key="7">
    <citation type="journal article" date="2005" name="PLoS Biol.">
        <title>The genomes of Oryza sativa: a history of duplications.</title>
        <authorList>
            <person name="Yu J."/>
            <person name="Wang J."/>
            <person name="Lin W."/>
            <person name="Li S."/>
            <person name="Li H."/>
            <person name="Zhou J."/>
            <person name="Ni P."/>
            <person name="Dong W."/>
            <person name="Hu S."/>
            <person name="Zeng C."/>
            <person name="Zhang J."/>
            <person name="Zhang Y."/>
            <person name="Li R."/>
            <person name="Xu Z."/>
            <person name="Li S."/>
            <person name="Li X."/>
            <person name="Zheng H."/>
            <person name="Cong L."/>
            <person name="Lin L."/>
            <person name="Yin J."/>
            <person name="Geng J."/>
            <person name="Li G."/>
            <person name="Shi J."/>
            <person name="Liu J."/>
            <person name="Lv H."/>
            <person name="Li J."/>
            <person name="Wang J."/>
            <person name="Deng Y."/>
            <person name="Ran L."/>
            <person name="Shi X."/>
            <person name="Wang X."/>
            <person name="Wu Q."/>
            <person name="Li C."/>
            <person name="Ren X."/>
            <person name="Wang J."/>
            <person name="Wang X."/>
            <person name="Li D."/>
            <person name="Liu D."/>
            <person name="Zhang X."/>
            <person name="Ji Z."/>
            <person name="Zhao W."/>
            <person name="Sun Y."/>
            <person name="Zhang Z."/>
            <person name="Bao J."/>
            <person name="Han Y."/>
            <person name="Dong L."/>
            <person name="Ji J."/>
            <person name="Chen P."/>
            <person name="Wu S."/>
            <person name="Liu J."/>
            <person name="Xiao Y."/>
            <person name="Bu D."/>
            <person name="Tan J."/>
            <person name="Yang L."/>
            <person name="Ye C."/>
            <person name="Zhang J."/>
            <person name="Xu J."/>
            <person name="Zhou Y."/>
            <person name="Yu Y."/>
            <person name="Zhang B."/>
            <person name="Zhuang S."/>
            <person name="Wei H."/>
            <person name="Liu B."/>
            <person name="Lei M."/>
            <person name="Yu H."/>
            <person name="Li Y."/>
            <person name="Xu H."/>
            <person name="Wei S."/>
            <person name="He X."/>
            <person name="Fang L."/>
            <person name="Zhang Z."/>
            <person name="Zhang Y."/>
            <person name="Huang X."/>
            <person name="Su Z."/>
            <person name="Tong W."/>
            <person name="Li J."/>
            <person name="Tong Z."/>
            <person name="Li S."/>
            <person name="Ye J."/>
            <person name="Wang L."/>
            <person name="Fang L."/>
            <person name="Lei T."/>
            <person name="Chen C.-S."/>
            <person name="Chen H.-C."/>
            <person name="Xu Z."/>
            <person name="Li H."/>
            <person name="Huang H."/>
            <person name="Zhang F."/>
            <person name="Xu H."/>
            <person name="Li N."/>
            <person name="Zhao C."/>
            <person name="Li S."/>
            <person name="Dong L."/>
            <person name="Huang Y."/>
            <person name="Li L."/>
            <person name="Xi Y."/>
            <person name="Qi Q."/>
            <person name="Li W."/>
            <person name="Zhang B."/>
            <person name="Hu W."/>
            <person name="Zhang Y."/>
            <person name="Tian X."/>
            <person name="Jiao Y."/>
            <person name="Liang X."/>
            <person name="Jin J."/>
            <person name="Gao L."/>
            <person name="Zheng W."/>
            <person name="Hao B."/>
            <person name="Liu S.-M."/>
            <person name="Wang W."/>
            <person name="Yuan L."/>
            <person name="Cao M."/>
            <person name="McDermott J."/>
            <person name="Samudrala R."/>
            <person name="Wang J."/>
            <person name="Wong G.K.-S."/>
            <person name="Yang H."/>
        </authorList>
    </citation>
    <scope>NUCLEOTIDE SEQUENCE [LARGE SCALE GENOMIC DNA]</scope>
    <source>
        <strain>cv. Nipponbare</strain>
    </source>
</reference>
<reference key="8">
    <citation type="journal article" date="2003" name="Science">
        <title>Collection, mapping, and annotation of over 28,000 cDNA clones from japonica rice.</title>
        <authorList>
            <consortium name="The rice full-length cDNA consortium"/>
        </authorList>
    </citation>
    <scope>NUCLEOTIDE SEQUENCE [LARGE SCALE MRNA] (ISOFORM 2)</scope>
    <source>
        <strain>cv. Nipponbare</strain>
    </source>
</reference>
<reference key="9">
    <citation type="journal article" date="2006" name="Genome">
        <title>Distribution, structure, organ-specific expression, and phylogenic analysis of the pathogenesis-related protein-3 chitinase gene family in rice (Oryza sativa L.).</title>
        <authorList>
            <person name="Nakazaki T."/>
            <person name="Tsukiyama T."/>
            <person name="Okumoto Y."/>
            <person name="Kageyama D."/>
            <person name="Naito K."/>
            <person name="Inouye K."/>
            <person name="Tanisaka T."/>
        </authorList>
    </citation>
    <scope>GENE FAMILY</scope>
    <scope>NOMENCLATURE</scope>
    <scope>TISSUE SPECIFICITY</scope>
</reference>
<proteinExistence type="evidence at transcript level"/>
<sequence>MAAKMATMVALVFGLALLLSAAAPAAAQNCGCQDGYCCSQWGYCGTTEAYCGQGCQSGPCWGSGGEAAAGMAGRKAGAGAGVSVESVVTEAFFNGIKNQAPNGCAGKSFYTRQSFLNAARSYSGFANDRTNDDSKREIAAFFAHVTHETGHMCYINEINGANMDYCDKSNKQWPCQPGKKYYGRGPLQISWNFNYGPAGKNIGFDGLRDPDKVAQDPTISFKTALWFWMNNVHQVMSQGFGATIRAINGALECNGKNPGAVNARVNYYKDYCRQFGVSPGGNLYC</sequence>
<comment type="function">
    <text evidence="4">Hydrolyzes chitin and may function in reproductive organs during embryogenesis and seed maturation.</text>
</comment>
<comment type="catalytic activity">
    <reaction>
        <text>Random endo-hydrolysis of N-acetyl-beta-D-glucosaminide (1-&gt;4)-beta-linkages in chitin and chitodextrins.</text>
        <dbReference type="EC" id="3.2.1.14"/>
    </reaction>
</comment>
<comment type="alternative products">
    <event type="alternative splicing"/>
    <isoform>
        <id>O04138-1</id>
        <name>1</name>
        <sequence type="displayed"/>
    </isoform>
    <isoform>
        <id>O04138-2</id>
        <name>2</name>
        <sequence type="described" ref="VSP_037998 VSP_037999"/>
    </isoform>
</comment>
<comment type="tissue specificity">
    <text evidence="5">Expressed at low levels in leaves, sheaths and meristems.</text>
</comment>
<comment type="similarity">
    <text evidence="8">Belongs to the glycosyl hydrolase 19 family. Chitinase class IV subfamily.</text>
</comment>
<feature type="signal peptide" evidence="2">
    <location>
        <begin position="1"/>
        <end position="27"/>
    </location>
</feature>
<feature type="chain" id="PRO_0000383463" description="Chitinase 4">
    <location>
        <begin position="28"/>
        <end position="285"/>
    </location>
</feature>
<feature type="domain" description="Chitin-binding type-1" evidence="3">
    <location>
        <begin position="28"/>
        <end position="62"/>
    </location>
</feature>
<feature type="active site" description="Proton donor" evidence="1">
    <location>
        <position position="148"/>
    </location>
</feature>
<feature type="disulfide bond" evidence="3">
    <location>
        <begin position="30"/>
        <end position="38"/>
    </location>
</feature>
<feature type="disulfide bond" evidence="3">
    <location>
        <begin position="32"/>
        <end position="44"/>
    </location>
</feature>
<feature type="disulfide bond" evidence="3">
    <location>
        <begin position="37"/>
        <end position="51"/>
    </location>
</feature>
<feature type="disulfide bond" evidence="3">
    <location>
        <begin position="55"/>
        <end position="60"/>
    </location>
</feature>
<feature type="disulfide bond" evidence="3">
    <location>
        <begin position="104"/>
        <end position="153"/>
    </location>
</feature>
<feature type="disulfide bond" evidence="3">
    <location>
        <begin position="166"/>
        <end position="175"/>
    </location>
</feature>
<feature type="disulfide bond" evidence="3">
    <location>
        <begin position="253"/>
        <end position="285"/>
    </location>
</feature>
<feature type="splice variant" id="VSP_037998" description="In isoform 2." evidence="6 7">
    <location>
        <begin position="1"/>
        <end position="56"/>
    </location>
</feature>
<feature type="splice variant" id="VSP_037999" description="In isoform 2." evidence="6 7">
    <original>SGPCWGSGGEAAAGMAGRKAGAGA</original>
    <variation>MANSPTLTMLVFLAIGLSLVLSAA</variation>
    <location>
        <begin position="57"/>
        <end position="80"/>
    </location>
</feature>
<gene>
    <name type="primary">Cht4</name>
    <name type="ordered locus">Os04g0493400</name>
    <name type="ordered locus">LOC_Os04g41620</name>
    <name type="ORF">OsJ_15306</name>
    <name type="ORF">OSJNBb0091E11.8</name>
</gene>
<dbReference type="EC" id="3.2.1.14"/>
<dbReference type="EMBL" id="AB054687">
    <property type="protein sequence ID" value="BAB21374.1"/>
    <property type="molecule type" value="Genomic_DNA"/>
</dbReference>
<dbReference type="EMBL" id="AB003194">
    <property type="protein sequence ID" value="BAA19793.1"/>
    <property type="molecule type" value="mRNA"/>
</dbReference>
<dbReference type="EMBL" id="AL606629">
    <property type="protein sequence ID" value="CAD41540.2"/>
    <property type="molecule type" value="Genomic_DNA"/>
</dbReference>
<dbReference type="EMBL" id="AP008210">
    <property type="protein sequence ID" value="BAF15098.1"/>
    <property type="molecule type" value="Genomic_DNA"/>
</dbReference>
<dbReference type="EMBL" id="AP014960">
    <property type="protein sequence ID" value="BAS89866.1"/>
    <property type="molecule type" value="Genomic_DNA"/>
</dbReference>
<dbReference type="EMBL" id="CM000141">
    <property type="protein sequence ID" value="EAZ31206.1"/>
    <property type="molecule type" value="Genomic_DNA"/>
</dbReference>
<dbReference type="EMBL" id="AK060363">
    <property type="protein sequence ID" value="BAG87422.1"/>
    <property type="molecule type" value="mRNA"/>
</dbReference>
<dbReference type="EMBL" id="AK099973">
    <property type="protein sequence ID" value="BAG94383.1"/>
    <property type="molecule type" value="mRNA"/>
</dbReference>
<dbReference type="PIR" id="T03405">
    <property type="entry name" value="T03405"/>
</dbReference>
<dbReference type="SMR" id="O04138"/>
<dbReference type="FunCoup" id="O04138">
    <property type="interactions" value="31"/>
</dbReference>
<dbReference type="STRING" id="39947.O04138"/>
<dbReference type="CAZy" id="CBM18">
    <property type="family name" value="Carbohydrate-Binding Module Family 18"/>
</dbReference>
<dbReference type="CAZy" id="GH19">
    <property type="family name" value="Glycoside Hydrolase Family 19"/>
</dbReference>
<dbReference type="PaxDb" id="39947-O04138"/>
<dbReference type="KEGG" id="dosa:Os04g0493400"/>
<dbReference type="eggNOG" id="KOG4742">
    <property type="taxonomic scope" value="Eukaryota"/>
</dbReference>
<dbReference type="InParanoid" id="O04138"/>
<dbReference type="OMA" id="NSNCHNA"/>
<dbReference type="Proteomes" id="UP000000763">
    <property type="component" value="Chromosome 4"/>
</dbReference>
<dbReference type="Proteomes" id="UP000007752">
    <property type="component" value="Chromosome 4"/>
</dbReference>
<dbReference type="Proteomes" id="UP000059680">
    <property type="component" value="Chromosome 4"/>
</dbReference>
<dbReference type="GO" id="GO:0008061">
    <property type="term" value="F:chitin binding"/>
    <property type="evidence" value="ECO:0007669"/>
    <property type="project" value="UniProtKB-KW"/>
</dbReference>
<dbReference type="GO" id="GO:0004568">
    <property type="term" value="F:chitinase activity"/>
    <property type="evidence" value="ECO:0000314"/>
    <property type="project" value="UniProtKB"/>
</dbReference>
<dbReference type="GO" id="GO:0008843">
    <property type="term" value="F:endochitinase activity"/>
    <property type="evidence" value="ECO:0007669"/>
    <property type="project" value="UniProtKB-EC"/>
</dbReference>
<dbReference type="GO" id="GO:0016998">
    <property type="term" value="P:cell wall macromolecule catabolic process"/>
    <property type="evidence" value="ECO:0007669"/>
    <property type="project" value="InterPro"/>
</dbReference>
<dbReference type="GO" id="GO:0006032">
    <property type="term" value="P:chitin catabolic process"/>
    <property type="evidence" value="ECO:0007669"/>
    <property type="project" value="UniProtKB-KW"/>
</dbReference>
<dbReference type="GO" id="GO:0006952">
    <property type="term" value="P:defense response"/>
    <property type="evidence" value="ECO:0007669"/>
    <property type="project" value="UniProtKB-KW"/>
</dbReference>
<dbReference type="GO" id="GO:0000272">
    <property type="term" value="P:polysaccharide catabolic process"/>
    <property type="evidence" value="ECO:0007669"/>
    <property type="project" value="UniProtKB-KW"/>
</dbReference>
<dbReference type="CDD" id="cd00325">
    <property type="entry name" value="chitinase_GH19"/>
    <property type="match status" value="1"/>
</dbReference>
<dbReference type="CDD" id="cd00035">
    <property type="entry name" value="ChtBD1"/>
    <property type="match status" value="1"/>
</dbReference>
<dbReference type="FunFam" id="3.30.60.10:FF:000002">
    <property type="entry name" value="Chitinase B"/>
    <property type="match status" value="1"/>
</dbReference>
<dbReference type="FunFam" id="3.30.20.10:FF:000001">
    <property type="entry name" value="Endochitinase (Chitinase)"/>
    <property type="match status" value="1"/>
</dbReference>
<dbReference type="FunFam" id="1.10.530.10:FF:000052">
    <property type="entry name" value="Endochitinase PR4"/>
    <property type="match status" value="1"/>
</dbReference>
<dbReference type="Gene3D" id="1.10.530.10">
    <property type="match status" value="1"/>
</dbReference>
<dbReference type="Gene3D" id="3.30.20.10">
    <property type="entry name" value="Endochitinase, domain 2"/>
    <property type="match status" value="1"/>
</dbReference>
<dbReference type="Gene3D" id="3.30.60.10">
    <property type="entry name" value="Endochitinase-like"/>
    <property type="match status" value="1"/>
</dbReference>
<dbReference type="InterPro" id="IPR001002">
    <property type="entry name" value="Chitin-bd_1"/>
</dbReference>
<dbReference type="InterPro" id="IPR018371">
    <property type="entry name" value="Chitin-binding_1_CS"/>
</dbReference>
<dbReference type="InterPro" id="IPR036861">
    <property type="entry name" value="Endochitinase-like_sf"/>
</dbReference>
<dbReference type="InterPro" id="IPR016283">
    <property type="entry name" value="Glyco_hydro_19"/>
</dbReference>
<dbReference type="InterPro" id="IPR000726">
    <property type="entry name" value="Glyco_hydro_19_cat"/>
</dbReference>
<dbReference type="InterPro" id="IPR023346">
    <property type="entry name" value="Lysozyme-like_dom_sf"/>
</dbReference>
<dbReference type="PANTHER" id="PTHR22595:SF197">
    <property type="entry name" value="CHITINASE FAMILY PROTEIN"/>
    <property type="match status" value="1"/>
</dbReference>
<dbReference type="PANTHER" id="PTHR22595">
    <property type="entry name" value="CHITINASE-RELATED"/>
    <property type="match status" value="1"/>
</dbReference>
<dbReference type="Pfam" id="PF00187">
    <property type="entry name" value="Chitin_bind_1"/>
    <property type="match status" value="1"/>
</dbReference>
<dbReference type="Pfam" id="PF00182">
    <property type="entry name" value="Glyco_hydro_19"/>
    <property type="match status" value="2"/>
</dbReference>
<dbReference type="PIRSF" id="PIRSF001060">
    <property type="entry name" value="Endochitinase"/>
    <property type="match status" value="1"/>
</dbReference>
<dbReference type="SMART" id="SM00270">
    <property type="entry name" value="ChtBD1"/>
    <property type="match status" value="1"/>
</dbReference>
<dbReference type="SUPFAM" id="SSF53955">
    <property type="entry name" value="Lysozyme-like"/>
    <property type="match status" value="1"/>
</dbReference>
<dbReference type="SUPFAM" id="SSF57016">
    <property type="entry name" value="Plant lectins/antimicrobial peptides"/>
    <property type="match status" value="1"/>
</dbReference>
<dbReference type="PROSITE" id="PS00026">
    <property type="entry name" value="CHIT_BIND_I_1"/>
    <property type="match status" value="1"/>
</dbReference>
<dbReference type="PROSITE" id="PS50941">
    <property type="entry name" value="CHIT_BIND_I_2"/>
    <property type="match status" value="1"/>
</dbReference>
<dbReference type="PROSITE" id="PS00773">
    <property type="entry name" value="CHITINASE_19_1"/>
    <property type="match status" value="1"/>
</dbReference>
<dbReference type="PROSITE" id="PS00774">
    <property type="entry name" value="CHITINASE_19_2"/>
    <property type="match status" value="1"/>
</dbReference>
<keyword id="KW-0025">Alternative splicing</keyword>
<keyword id="KW-0119">Carbohydrate metabolism</keyword>
<keyword id="KW-0146">Chitin degradation</keyword>
<keyword id="KW-0147">Chitin-binding</keyword>
<keyword id="KW-1015">Disulfide bond</keyword>
<keyword id="KW-0326">Glycosidase</keyword>
<keyword id="KW-0378">Hydrolase</keyword>
<keyword id="KW-0611">Plant defense</keyword>
<keyword id="KW-0624">Polysaccharide degradation</keyword>
<keyword id="KW-1185">Reference proteome</keyword>
<keyword id="KW-0732">Signal</keyword>
<evidence type="ECO:0000250" key="1">
    <source>
        <dbReference type="UniProtKB" id="P29022"/>
    </source>
</evidence>
<evidence type="ECO:0000255" key="2"/>
<evidence type="ECO:0000255" key="3">
    <source>
        <dbReference type="PROSITE-ProRule" id="PRU00261"/>
    </source>
</evidence>
<evidence type="ECO:0000269" key="4">
    <source>
    </source>
</evidence>
<evidence type="ECO:0000269" key="5">
    <source>
    </source>
</evidence>
<evidence type="ECO:0000303" key="6">
    <source>
    </source>
</evidence>
<evidence type="ECO:0000303" key="7">
    <source>
    </source>
</evidence>
<evidence type="ECO:0000305" key="8"/>
<organism>
    <name type="scientific">Oryza sativa subsp. japonica</name>
    <name type="common">Rice</name>
    <dbReference type="NCBI Taxonomy" id="39947"/>
    <lineage>
        <taxon>Eukaryota</taxon>
        <taxon>Viridiplantae</taxon>
        <taxon>Streptophyta</taxon>
        <taxon>Embryophyta</taxon>
        <taxon>Tracheophyta</taxon>
        <taxon>Spermatophyta</taxon>
        <taxon>Magnoliopsida</taxon>
        <taxon>Liliopsida</taxon>
        <taxon>Poales</taxon>
        <taxon>Poaceae</taxon>
        <taxon>BOP clade</taxon>
        <taxon>Oryzoideae</taxon>
        <taxon>Oryzeae</taxon>
        <taxon>Oryzinae</taxon>
        <taxon>Oryza</taxon>
        <taxon>Oryza sativa</taxon>
    </lineage>
</organism>